<proteinExistence type="inferred from homology"/>
<name>RS8_STAA9</name>
<comment type="function">
    <text evidence="1">One of the primary rRNA binding proteins, it binds directly to 16S rRNA central domain where it helps coordinate assembly of the platform of the 30S subunit.</text>
</comment>
<comment type="subunit">
    <text evidence="1">Part of the 30S ribosomal subunit. Contacts proteins S5 and S12.</text>
</comment>
<comment type="similarity">
    <text evidence="1">Belongs to the universal ribosomal protein uS8 family.</text>
</comment>
<sequence>MTMTDPIADMLTRVRNANMVRHEKLELPASNIKKEIAEILKSEGFIKNVEYVEDDKQGVLRLFLKYGQNDERVITGLKRISKPGLRVYAKASEMPKVLNGLGIALVSTSEGVITDKEARKRNVGGEIIAYVW</sequence>
<accession>A5IV20</accession>
<dbReference type="EMBL" id="CP000703">
    <property type="protein sequence ID" value="ABQ50043.1"/>
    <property type="molecule type" value="Genomic_DNA"/>
</dbReference>
<dbReference type="RefSeq" id="WP_000178881.1">
    <property type="nucleotide sequence ID" value="NC_009487.1"/>
</dbReference>
<dbReference type="SMR" id="A5IV20"/>
<dbReference type="GeneID" id="98346548"/>
<dbReference type="KEGG" id="saj:SaurJH9_2263"/>
<dbReference type="HOGENOM" id="CLU_098428_0_2_9"/>
<dbReference type="GO" id="GO:1990904">
    <property type="term" value="C:ribonucleoprotein complex"/>
    <property type="evidence" value="ECO:0007669"/>
    <property type="project" value="UniProtKB-KW"/>
</dbReference>
<dbReference type="GO" id="GO:0005840">
    <property type="term" value="C:ribosome"/>
    <property type="evidence" value="ECO:0007669"/>
    <property type="project" value="UniProtKB-KW"/>
</dbReference>
<dbReference type="GO" id="GO:0019843">
    <property type="term" value="F:rRNA binding"/>
    <property type="evidence" value="ECO:0007669"/>
    <property type="project" value="UniProtKB-UniRule"/>
</dbReference>
<dbReference type="GO" id="GO:0003735">
    <property type="term" value="F:structural constituent of ribosome"/>
    <property type="evidence" value="ECO:0007669"/>
    <property type="project" value="InterPro"/>
</dbReference>
<dbReference type="GO" id="GO:0006412">
    <property type="term" value="P:translation"/>
    <property type="evidence" value="ECO:0007669"/>
    <property type="project" value="UniProtKB-UniRule"/>
</dbReference>
<dbReference type="FunFam" id="3.30.1370.30:FF:000002">
    <property type="entry name" value="30S ribosomal protein S8"/>
    <property type="match status" value="1"/>
</dbReference>
<dbReference type="FunFam" id="3.30.1490.10:FF:000001">
    <property type="entry name" value="30S ribosomal protein S8"/>
    <property type="match status" value="1"/>
</dbReference>
<dbReference type="Gene3D" id="3.30.1370.30">
    <property type="match status" value="1"/>
</dbReference>
<dbReference type="Gene3D" id="3.30.1490.10">
    <property type="match status" value="1"/>
</dbReference>
<dbReference type="HAMAP" id="MF_01302_B">
    <property type="entry name" value="Ribosomal_uS8_B"/>
    <property type="match status" value="1"/>
</dbReference>
<dbReference type="InterPro" id="IPR000630">
    <property type="entry name" value="Ribosomal_uS8"/>
</dbReference>
<dbReference type="InterPro" id="IPR047863">
    <property type="entry name" value="Ribosomal_uS8_CS"/>
</dbReference>
<dbReference type="InterPro" id="IPR035987">
    <property type="entry name" value="Ribosomal_uS8_sf"/>
</dbReference>
<dbReference type="NCBIfam" id="NF001109">
    <property type="entry name" value="PRK00136.1"/>
    <property type="match status" value="1"/>
</dbReference>
<dbReference type="PANTHER" id="PTHR11758">
    <property type="entry name" value="40S RIBOSOMAL PROTEIN S15A"/>
    <property type="match status" value="1"/>
</dbReference>
<dbReference type="Pfam" id="PF00410">
    <property type="entry name" value="Ribosomal_S8"/>
    <property type="match status" value="1"/>
</dbReference>
<dbReference type="SUPFAM" id="SSF56047">
    <property type="entry name" value="Ribosomal protein S8"/>
    <property type="match status" value="1"/>
</dbReference>
<dbReference type="PROSITE" id="PS00053">
    <property type="entry name" value="RIBOSOMAL_S8"/>
    <property type="match status" value="1"/>
</dbReference>
<protein>
    <recommendedName>
        <fullName evidence="1">Small ribosomal subunit protein uS8</fullName>
    </recommendedName>
    <alternativeName>
        <fullName evidence="2">30S ribosomal protein S8</fullName>
    </alternativeName>
</protein>
<keyword id="KW-0687">Ribonucleoprotein</keyword>
<keyword id="KW-0689">Ribosomal protein</keyword>
<keyword id="KW-0694">RNA-binding</keyword>
<keyword id="KW-0699">rRNA-binding</keyword>
<reference key="1">
    <citation type="submission" date="2007-05" db="EMBL/GenBank/DDBJ databases">
        <title>Complete sequence of chromosome of Staphylococcus aureus subsp. aureus JH9.</title>
        <authorList>
            <consortium name="US DOE Joint Genome Institute"/>
            <person name="Copeland A."/>
            <person name="Lucas S."/>
            <person name="Lapidus A."/>
            <person name="Barry K."/>
            <person name="Detter J.C."/>
            <person name="Glavina del Rio T."/>
            <person name="Hammon N."/>
            <person name="Israni S."/>
            <person name="Pitluck S."/>
            <person name="Chain P."/>
            <person name="Malfatti S."/>
            <person name="Shin M."/>
            <person name="Vergez L."/>
            <person name="Schmutz J."/>
            <person name="Larimer F."/>
            <person name="Land M."/>
            <person name="Hauser L."/>
            <person name="Kyrpides N."/>
            <person name="Kim E."/>
            <person name="Tomasz A."/>
            <person name="Richardson P."/>
        </authorList>
    </citation>
    <scope>NUCLEOTIDE SEQUENCE [LARGE SCALE GENOMIC DNA]</scope>
    <source>
        <strain>JH9</strain>
    </source>
</reference>
<feature type="chain" id="PRO_1000085949" description="Small ribosomal subunit protein uS8">
    <location>
        <begin position="1"/>
        <end position="132"/>
    </location>
</feature>
<gene>
    <name evidence="1" type="primary">rpsH</name>
    <name type="ordered locus">SaurJH9_2263</name>
</gene>
<evidence type="ECO:0000255" key="1">
    <source>
        <dbReference type="HAMAP-Rule" id="MF_01302"/>
    </source>
</evidence>
<evidence type="ECO:0000305" key="2"/>
<organism>
    <name type="scientific">Staphylococcus aureus (strain JH9)</name>
    <dbReference type="NCBI Taxonomy" id="359786"/>
    <lineage>
        <taxon>Bacteria</taxon>
        <taxon>Bacillati</taxon>
        <taxon>Bacillota</taxon>
        <taxon>Bacilli</taxon>
        <taxon>Bacillales</taxon>
        <taxon>Staphylococcaceae</taxon>
        <taxon>Staphylococcus</taxon>
    </lineage>
</organism>